<reference key="1">
    <citation type="journal article" date="2003" name="Proc. Natl. Acad. Sci. U.S.A.">
        <title>The complete genome sequence of Mycobacterium bovis.</title>
        <authorList>
            <person name="Garnier T."/>
            <person name="Eiglmeier K."/>
            <person name="Camus J.-C."/>
            <person name="Medina N."/>
            <person name="Mansoor H."/>
            <person name="Pryor M."/>
            <person name="Duthoy S."/>
            <person name="Grondin S."/>
            <person name="Lacroix C."/>
            <person name="Monsempe C."/>
            <person name="Simon S."/>
            <person name="Harris B."/>
            <person name="Atkin R."/>
            <person name="Doggett J."/>
            <person name="Mayes R."/>
            <person name="Keating L."/>
            <person name="Wheeler P.R."/>
            <person name="Parkhill J."/>
            <person name="Barrell B.G."/>
            <person name="Cole S.T."/>
            <person name="Gordon S.V."/>
            <person name="Hewinson R.G."/>
        </authorList>
    </citation>
    <scope>NUCLEOTIDE SEQUENCE [LARGE SCALE GENOMIC DNA]</scope>
    <source>
        <strain>ATCC BAA-935 / AF2122/97</strain>
    </source>
</reference>
<reference key="2">
    <citation type="journal article" date="2017" name="Genome Announc.">
        <title>Updated reference genome sequence and annotation of Mycobacterium bovis AF2122/97.</title>
        <authorList>
            <person name="Malone K.M."/>
            <person name="Farrell D."/>
            <person name="Stuber T.P."/>
            <person name="Schubert O.T."/>
            <person name="Aebersold R."/>
            <person name="Robbe-Austerman S."/>
            <person name="Gordon S.V."/>
        </authorList>
    </citation>
    <scope>NUCLEOTIDE SEQUENCE [LARGE SCALE GENOMIC DNA]</scope>
    <scope>GENOME REANNOTATION</scope>
    <source>
        <strain>ATCC BAA-935 / AF2122/97</strain>
    </source>
</reference>
<feature type="chain" id="PRO_0000060216" description="Phosphate transport system permease protein PstC 2">
    <location>
        <begin position="1"/>
        <end position="324"/>
    </location>
</feature>
<feature type="transmembrane region" description="Helical" evidence="2">
    <location>
        <begin position="30"/>
        <end position="50"/>
    </location>
</feature>
<feature type="transmembrane region" description="Helical" evidence="2">
    <location>
        <begin position="90"/>
        <end position="110"/>
    </location>
</feature>
<feature type="transmembrane region" description="Helical" evidence="2">
    <location>
        <begin position="125"/>
        <end position="145"/>
    </location>
</feature>
<feature type="transmembrane region" description="Helical" evidence="2">
    <location>
        <begin position="174"/>
        <end position="194"/>
    </location>
</feature>
<feature type="transmembrane region" description="Helical" evidence="2">
    <location>
        <begin position="237"/>
        <end position="257"/>
    </location>
</feature>
<feature type="transmembrane region" description="Helical" evidence="2">
    <location>
        <begin position="290"/>
        <end position="310"/>
    </location>
</feature>
<feature type="domain" description="ABC transmembrane type-1" evidence="2">
    <location>
        <begin position="85"/>
        <end position="314"/>
    </location>
</feature>
<sequence>MVTEPLTKPALVAVDMRPARRGERLFKLAASAAGSTIVIAILLIAIFLLVRAVPSLRANHANFFTSTQFDTSDDEQLAFGVRDLFMVTALSSITALVLAVPVAVGIAVFLTHYAPRRLSRPFGAMVDLLAAVPSIIFGLWGIFVLAPKLEPIARFLNRNLGWLFLFKQGNVSLAGGGTIFTAGIVLSVMILPIVTSISREVFRQTPLIQIEAALALGATKWEVVRMTVLPYGRSGVVAASMLGLGRALGETVAVLVILRSAARPGTWSLFDGGYTFASKIASAASEFSEPLPTGAYISAGFALFVLTFLVNAAARAIAGGKVNG</sequence>
<protein>
    <recommendedName>
        <fullName>Phosphate transport system permease protein PstC 2</fullName>
    </recommendedName>
</protein>
<gene>
    <name type="primary">pstC2</name>
    <name type="ordered locus">BQ2027_MB0952</name>
</gene>
<keyword id="KW-1003">Cell membrane</keyword>
<keyword id="KW-0472">Membrane</keyword>
<keyword id="KW-0592">Phosphate transport</keyword>
<keyword id="KW-1185">Reference proteome</keyword>
<keyword id="KW-0812">Transmembrane</keyword>
<keyword id="KW-1133">Transmembrane helix</keyword>
<keyword id="KW-0813">Transport</keyword>
<proteinExistence type="inferred from homology"/>
<dbReference type="EMBL" id="LT708304">
    <property type="protein sequence ID" value="SIT99550.1"/>
    <property type="molecule type" value="Genomic_DNA"/>
</dbReference>
<dbReference type="RefSeq" id="NP_854609.1">
    <property type="nucleotide sequence ID" value="NC_002945.3"/>
</dbReference>
<dbReference type="SMR" id="P0A631"/>
<dbReference type="KEGG" id="mbo:BQ2027_MB0952"/>
<dbReference type="PATRIC" id="fig|233413.5.peg.1037"/>
<dbReference type="Proteomes" id="UP000001419">
    <property type="component" value="Chromosome"/>
</dbReference>
<dbReference type="GO" id="GO:0005886">
    <property type="term" value="C:plasma membrane"/>
    <property type="evidence" value="ECO:0007669"/>
    <property type="project" value="UniProtKB-SubCell"/>
</dbReference>
<dbReference type="GO" id="GO:0005315">
    <property type="term" value="F:phosphate transmembrane transporter activity"/>
    <property type="evidence" value="ECO:0007669"/>
    <property type="project" value="InterPro"/>
</dbReference>
<dbReference type="GO" id="GO:0006817">
    <property type="term" value="P:phosphate ion transport"/>
    <property type="evidence" value="ECO:0007669"/>
    <property type="project" value="UniProtKB-KW"/>
</dbReference>
<dbReference type="CDD" id="cd06261">
    <property type="entry name" value="TM_PBP2"/>
    <property type="match status" value="1"/>
</dbReference>
<dbReference type="FunFam" id="1.10.3720.10:FF:000112">
    <property type="entry name" value="Phosphate transport system permease protein"/>
    <property type="match status" value="1"/>
</dbReference>
<dbReference type="Gene3D" id="1.10.3720.10">
    <property type="entry name" value="MetI-like"/>
    <property type="match status" value="1"/>
</dbReference>
<dbReference type="InterPro" id="IPR000515">
    <property type="entry name" value="MetI-like"/>
</dbReference>
<dbReference type="InterPro" id="IPR035906">
    <property type="entry name" value="MetI-like_sf"/>
</dbReference>
<dbReference type="InterPro" id="IPR011864">
    <property type="entry name" value="Phosphate_PstC"/>
</dbReference>
<dbReference type="InterPro" id="IPR051124">
    <property type="entry name" value="Phosphate_Transport_Permease"/>
</dbReference>
<dbReference type="NCBIfam" id="TIGR02138">
    <property type="entry name" value="phosphate_pstC"/>
    <property type="match status" value="1"/>
</dbReference>
<dbReference type="PANTHER" id="PTHR30425">
    <property type="entry name" value="PHOSPHATE TRANSPORT SYSTEM PERMEASE PROTEIN PST"/>
    <property type="match status" value="1"/>
</dbReference>
<dbReference type="PANTHER" id="PTHR30425:SF1">
    <property type="entry name" value="PHOSPHATE TRANSPORT SYSTEM PERMEASE PROTEIN PSTC"/>
    <property type="match status" value="1"/>
</dbReference>
<dbReference type="Pfam" id="PF00528">
    <property type="entry name" value="BPD_transp_1"/>
    <property type="match status" value="1"/>
</dbReference>
<dbReference type="SUPFAM" id="SSF161098">
    <property type="entry name" value="MetI-like"/>
    <property type="match status" value="1"/>
</dbReference>
<dbReference type="PROSITE" id="PS50928">
    <property type="entry name" value="ABC_TM1"/>
    <property type="match status" value="1"/>
</dbReference>
<organism>
    <name type="scientific">Mycobacterium bovis (strain ATCC BAA-935 / AF2122/97)</name>
    <dbReference type="NCBI Taxonomy" id="233413"/>
    <lineage>
        <taxon>Bacteria</taxon>
        <taxon>Bacillati</taxon>
        <taxon>Actinomycetota</taxon>
        <taxon>Actinomycetes</taxon>
        <taxon>Mycobacteriales</taxon>
        <taxon>Mycobacteriaceae</taxon>
        <taxon>Mycobacterium</taxon>
        <taxon>Mycobacterium tuberculosis complex</taxon>
    </lineage>
</organism>
<accession>P0A631</accession>
<accession>A0A1R3XWV5</accession>
<accession>O86344</accession>
<accession>Q50797</accession>
<accession>X2BGK2</accession>
<comment type="function">
    <text evidence="1">Part of the binding-protein-dependent transport system for phosphate; probably responsible for the translocation of the substrate across the membrane.</text>
</comment>
<comment type="subcellular location">
    <subcellularLocation>
        <location evidence="1">Cell membrane</location>
        <topology evidence="2">Multi-pass membrane protein</topology>
    </subcellularLocation>
</comment>
<comment type="similarity">
    <text evidence="3">Belongs to the binding-protein-dependent transport system permease family. CysTW subfamily.</text>
</comment>
<evidence type="ECO:0000250" key="1"/>
<evidence type="ECO:0000255" key="2">
    <source>
        <dbReference type="PROSITE-ProRule" id="PRU00441"/>
    </source>
</evidence>
<evidence type="ECO:0000305" key="3"/>
<name>PSTC2_MYCBO</name>